<comment type="similarity">
    <text evidence="2">Belongs to the LOB domain-containing protein family.</text>
</comment>
<name>LBD8_ARATH</name>
<sequence>MEPLGDRRPCCVCITKNRNCPRFCEYAEYFPYELRSHYESTNELFGTPKIIKMMRHAPEEKKQMLATSIIMEGNAWTNDPVSGGFGMVQKIMWKIMLHKAYLHELEEKIKEEKEKIELHL</sequence>
<protein>
    <recommendedName>
        <fullName>LOB domain-containing protein 8</fullName>
    </recommendedName>
    <alternativeName>
        <fullName>ASYMMETRIC LEAVES 2-like protein 34</fullName>
        <shortName>AS2-like protein 34</shortName>
    </alternativeName>
</protein>
<accession>Q9ZUP0</accession>
<accession>B7XG88</accession>
<keyword id="KW-1185">Reference proteome</keyword>
<organism>
    <name type="scientific">Arabidopsis thaliana</name>
    <name type="common">Mouse-ear cress</name>
    <dbReference type="NCBI Taxonomy" id="3702"/>
    <lineage>
        <taxon>Eukaryota</taxon>
        <taxon>Viridiplantae</taxon>
        <taxon>Streptophyta</taxon>
        <taxon>Embryophyta</taxon>
        <taxon>Tracheophyta</taxon>
        <taxon>Spermatophyta</taxon>
        <taxon>Magnoliopsida</taxon>
        <taxon>eudicotyledons</taxon>
        <taxon>Gunneridae</taxon>
        <taxon>Pentapetalae</taxon>
        <taxon>rosids</taxon>
        <taxon>malvids</taxon>
        <taxon>Brassicales</taxon>
        <taxon>Brassicaceae</taxon>
        <taxon>Camelineae</taxon>
        <taxon>Arabidopsis</taxon>
    </lineage>
</organism>
<dbReference type="EMBL" id="AB473867">
    <property type="protein sequence ID" value="BAH10578.1"/>
    <property type="molecule type" value="mRNA"/>
</dbReference>
<dbReference type="EMBL" id="AC005917">
    <property type="protein sequence ID" value="AAD10150.1"/>
    <property type="molecule type" value="Genomic_DNA"/>
</dbReference>
<dbReference type="EMBL" id="CP002685">
    <property type="protein sequence ID" value="AEC06890.1"/>
    <property type="molecule type" value="Genomic_DNA"/>
</dbReference>
<dbReference type="PIR" id="F84577">
    <property type="entry name" value="F84577"/>
</dbReference>
<dbReference type="RefSeq" id="NP_179541.1">
    <property type="nucleotide sequence ID" value="NM_127509.5"/>
</dbReference>
<dbReference type="SMR" id="Q9ZUP0"/>
<dbReference type="STRING" id="3702.Q9ZUP0"/>
<dbReference type="PaxDb" id="3702-AT2G19510.1"/>
<dbReference type="EnsemblPlants" id="AT2G19510.1">
    <property type="protein sequence ID" value="AT2G19510.1"/>
    <property type="gene ID" value="AT2G19510"/>
</dbReference>
<dbReference type="GeneID" id="816470"/>
<dbReference type="Gramene" id="AT2G19510.1">
    <property type="protein sequence ID" value="AT2G19510.1"/>
    <property type="gene ID" value="AT2G19510"/>
</dbReference>
<dbReference type="KEGG" id="ath:AT2G19510"/>
<dbReference type="Araport" id="AT2G19510"/>
<dbReference type="TAIR" id="AT2G19510">
    <property type="gene designation" value="LBD8"/>
</dbReference>
<dbReference type="HOGENOM" id="CLU_058353_8_0_1"/>
<dbReference type="InParanoid" id="Q9ZUP0"/>
<dbReference type="OMA" id="HKAYLHE"/>
<dbReference type="PhylomeDB" id="Q9ZUP0"/>
<dbReference type="PRO" id="PR:Q9ZUP0"/>
<dbReference type="Proteomes" id="UP000006548">
    <property type="component" value="Chromosome 2"/>
</dbReference>
<dbReference type="ExpressionAtlas" id="Q9ZUP0">
    <property type="expression patterns" value="baseline and differential"/>
</dbReference>
<dbReference type="InterPro" id="IPR004883">
    <property type="entry name" value="LOB"/>
</dbReference>
<dbReference type="PANTHER" id="PTHR31301">
    <property type="entry name" value="LOB DOMAIN-CONTAINING PROTEIN 4-RELATED"/>
    <property type="match status" value="1"/>
</dbReference>
<dbReference type="PANTHER" id="PTHR31301:SF103">
    <property type="entry name" value="LOB DOMAIN-CONTAINING PROTEIN 5-RELATED"/>
    <property type="match status" value="1"/>
</dbReference>
<dbReference type="Pfam" id="PF03195">
    <property type="entry name" value="LOB"/>
    <property type="match status" value="1"/>
</dbReference>
<dbReference type="PROSITE" id="PS50891">
    <property type="entry name" value="LOB"/>
    <property type="match status" value="1"/>
</dbReference>
<feature type="chain" id="PRO_0000132259" description="LOB domain-containing protein 8">
    <location>
        <begin position="1"/>
        <end position="120"/>
    </location>
</feature>
<feature type="domain" description="LOB" evidence="1">
    <location>
        <begin position="8"/>
        <end position="109"/>
    </location>
</feature>
<reference key="1">
    <citation type="journal article" date="2009" name="Plant J.">
        <title>Characterization of genes in the ASYMMETRIC LEAVES2/LATERAL ORGAN BOUNDARIES (AS2/LOB) family in Arabidopsis thaliana, and functional and molecular comparisons between AS2 and other family members.</title>
        <authorList>
            <person name="Matsumura Y."/>
            <person name="Iwakawa H."/>
            <person name="Machida Y."/>
            <person name="Machida C."/>
        </authorList>
    </citation>
    <scope>NUCLEOTIDE SEQUENCE [MRNA]</scope>
    <source>
        <strain>cv. Columbia</strain>
    </source>
</reference>
<reference key="2">
    <citation type="journal article" date="1999" name="Nature">
        <title>Sequence and analysis of chromosome 2 of the plant Arabidopsis thaliana.</title>
        <authorList>
            <person name="Lin X."/>
            <person name="Kaul S."/>
            <person name="Rounsley S.D."/>
            <person name="Shea T.P."/>
            <person name="Benito M.-I."/>
            <person name="Town C.D."/>
            <person name="Fujii C.Y."/>
            <person name="Mason T.M."/>
            <person name="Bowman C.L."/>
            <person name="Barnstead M.E."/>
            <person name="Feldblyum T.V."/>
            <person name="Buell C.R."/>
            <person name="Ketchum K.A."/>
            <person name="Lee J.J."/>
            <person name="Ronning C.M."/>
            <person name="Koo H.L."/>
            <person name="Moffat K.S."/>
            <person name="Cronin L.A."/>
            <person name="Shen M."/>
            <person name="Pai G."/>
            <person name="Van Aken S."/>
            <person name="Umayam L."/>
            <person name="Tallon L.J."/>
            <person name="Gill J.E."/>
            <person name="Adams M.D."/>
            <person name="Carrera A.J."/>
            <person name="Creasy T.H."/>
            <person name="Goodman H.M."/>
            <person name="Somerville C.R."/>
            <person name="Copenhaver G.P."/>
            <person name="Preuss D."/>
            <person name="Nierman W.C."/>
            <person name="White O."/>
            <person name="Eisen J.A."/>
            <person name="Salzberg S.L."/>
            <person name="Fraser C.M."/>
            <person name="Venter J.C."/>
        </authorList>
    </citation>
    <scope>NUCLEOTIDE SEQUENCE [LARGE SCALE GENOMIC DNA]</scope>
    <source>
        <strain>cv. Columbia</strain>
    </source>
</reference>
<reference key="3">
    <citation type="journal article" date="2017" name="Plant J.">
        <title>Araport11: a complete reannotation of the Arabidopsis thaliana reference genome.</title>
        <authorList>
            <person name="Cheng C.Y."/>
            <person name="Krishnakumar V."/>
            <person name="Chan A.P."/>
            <person name="Thibaud-Nissen F."/>
            <person name="Schobel S."/>
            <person name="Town C.D."/>
        </authorList>
    </citation>
    <scope>GENOME REANNOTATION</scope>
    <source>
        <strain>cv. Columbia</strain>
    </source>
</reference>
<reference key="4">
    <citation type="journal article" date="2002" name="Plant Physiol.">
        <title>The LATERAL ORGAN BOUNDARIES gene defines a novel, plant-specific gene family.</title>
        <authorList>
            <person name="Shuai B."/>
            <person name="Reynaga-Pena C.G."/>
            <person name="Springer P.S."/>
        </authorList>
    </citation>
    <scope>GENE FAMILY</scope>
    <scope>NOMENCLATURE</scope>
</reference>
<reference key="5">
    <citation type="journal article" date="2002" name="Plant Cell Physiol.">
        <title>The ASYMMETRIC LEAVES2 gene of Arabidopsis thaliana, required for formation of a symmetric flat leaf lamina, encodes a member of a novel family of proteins characterized by cysteine repeats and a leucine zipper.</title>
        <authorList>
            <person name="Iwakawa H."/>
            <person name="Ueno Y."/>
            <person name="Semiarti E."/>
            <person name="Onouchi H."/>
            <person name="Kojima S."/>
            <person name="Tsukaya H."/>
            <person name="Hasebe M."/>
            <person name="Soma T."/>
            <person name="Ikezaki M."/>
            <person name="Machida C."/>
            <person name="Machida Y."/>
        </authorList>
    </citation>
    <scope>GENE FAMILY</scope>
    <scope>NOMENCLATURE</scope>
</reference>
<gene>
    <name type="primary">LBD8</name>
    <name type="synonym">ASL34</name>
    <name type="ordered locus">At2g19510</name>
    <name type="ORF">F3P11.11</name>
</gene>
<proteinExistence type="evidence at transcript level"/>
<evidence type="ECO:0000255" key="1">
    <source>
        <dbReference type="PROSITE-ProRule" id="PRU00291"/>
    </source>
</evidence>
<evidence type="ECO:0000305" key="2"/>